<gene>
    <name type="primary">sodB</name>
    <name type="synonym">sod</name>
    <name type="synonym">sodA</name>
    <name type="ordered locus">Rv3846</name>
    <name type="ORF">MTCY01A6.22c</name>
</gene>
<dbReference type="EC" id="1.15.1.1" evidence="2 7"/>
<dbReference type="EMBL" id="X52861">
    <property type="protein sequence ID" value="CAA37042.1"/>
    <property type="molecule type" value="Genomic_DNA"/>
</dbReference>
<dbReference type="EMBL" id="AF061030">
    <property type="protein sequence ID" value="AAD15824.1"/>
    <property type="molecule type" value="Genomic_DNA"/>
</dbReference>
<dbReference type="EMBL" id="AL123456">
    <property type="protein sequence ID" value="CCP46675.1"/>
    <property type="molecule type" value="Genomic_DNA"/>
</dbReference>
<dbReference type="PIR" id="S15205">
    <property type="entry name" value="S15205"/>
</dbReference>
<dbReference type="RefSeq" id="NP_218363.1">
    <property type="nucleotide sequence ID" value="NC_000962.3"/>
</dbReference>
<dbReference type="RefSeq" id="WP_003399735.1">
    <property type="nucleotide sequence ID" value="NZ_NVQJ01000057.1"/>
</dbReference>
<dbReference type="PDB" id="1GN2">
    <property type="method" value="X-ray"/>
    <property type="resolution" value="3.40 A"/>
    <property type="chains" value="A/B/C/D/E/F/G/H=1-207"/>
</dbReference>
<dbReference type="PDB" id="1GN3">
    <property type="method" value="X-ray"/>
    <property type="resolution" value="4.00 A"/>
    <property type="chains" value="A/B=1-207"/>
</dbReference>
<dbReference type="PDB" id="1GN4">
    <property type="method" value="X-ray"/>
    <property type="resolution" value="2.50 A"/>
    <property type="chains" value="A/B/C/D=1-207"/>
</dbReference>
<dbReference type="PDB" id="1GN6">
    <property type="method" value="X-ray"/>
    <property type="resolution" value="2.90 A"/>
    <property type="chains" value="A/B/C/D=1-207"/>
</dbReference>
<dbReference type="PDB" id="1IDS">
    <property type="method" value="X-ray"/>
    <property type="resolution" value="2.00 A"/>
    <property type="chains" value="A/B/C/D=1-207"/>
</dbReference>
<dbReference type="PDBsum" id="1GN2"/>
<dbReference type="PDBsum" id="1GN3"/>
<dbReference type="PDBsum" id="1GN4"/>
<dbReference type="PDBsum" id="1GN6"/>
<dbReference type="PDBsum" id="1IDS"/>
<dbReference type="SMR" id="P9WGE7"/>
<dbReference type="FunCoup" id="P9WGE7">
    <property type="interactions" value="297"/>
</dbReference>
<dbReference type="STRING" id="83332.Rv3846"/>
<dbReference type="PaxDb" id="83332-Rv3846"/>
<dbReference type="ABCD" id="P9WGE7">
    <property type="antibodies" value="1 sequenced antibody"/>
</dbReference>
<dbReference type="DNASU" id="886174"/>
<dbReference type="GeneID" id="886174"/>
<dbReference type="KEGG" id="mtu:Rv3846"/>
<dbReference type="KEGG" id="mtv:RVBD_3846"/>
<dbReference type="TubercuList" id="Rv3846"/>
<dbReference type="eggNOG" id="COG0605">
    <property type="taxonomic scope" value="Bacteria"/>
</dbReference>
<dbReference type="InParanoid" id="P9WGE7"/>
<dbReference type="OrthoDB" id="9803125at2"/>
<dbReference type="PhylomeDB" id="P9WGE7"/>
<dbReference type="Reactome" id="R-HSA-1222387">
    <property type="pathway name" value="Tolerance of reactive oxygen produced by macrophages"/>
</dbReference>
<dbReference type="EvolutionaryTrace" id="P9WGE7"/>
<dbReference type="Proteomes" id="UP000001584">
    <property type="component" value="Chromosome"/>
</dbReference>
<dbReference type="GO" id="GO:0005829">
    <property type="term" value="C:cytosol"/>
    <property type="evidence" value="ECO:0007005"/>
    <property type="project" value="MTBBASE"/>
</dbReference>
<dbReference type="GO" id="GO:0005576">
    <property type="term" value="C:extracellular region"/>
    <property type="evidence" value="ECO:0000314"/>
    <property type="project" value="MTBBASE"/>
</dbReference>
<dbReference type="GO" id="GO:0042597">
    <property type="term" value="C:periplasmic space"/>
    <property type="evidence" value="ECO:0000304"/>
    <property type="project" value="Reactome"/>
</dbReference>
<dbReference type="GO" id="GO:0005886">
    <property type="term" value="C:plasma membrane"/>
    <property type="evidence" value="ECO:0007005"/>
    <property type="project" value="MTBBASE"/>
</dbReference>
<dbReference type="GO" id="GO:0005506">
    <property type="term" value="F:iron ion binding"/>
    <property type="evidence" value="ECO:0000314"/>
    <property type="project" value="MTBBASE"/>
</dbReference>
<dbReference type="GO" id="GO:0004784">
    <property type="term" value="F:superoxide dismutase activity"/>
    <property type="evidence" value="ECO:0000314"/>
    <property type="project" value="MTBBASE"/>
</dbReference>
<dbReference type="GO" id="GO:0098754">
    <property type="term" value="P:detoxification"/>
    <property type="evidence" value="ECO:0000315"/>
    <property type="project" value="MTBBASE"/>
</dbReference>
<dbReference type="GO" id="GO:0006979">
    <property type="term" value="P:response to oxidative stress"/>
    <property type="evidence" value="ECO:0000315"/>
    <property type="project" value="MTBBASE"/>
</dbReference>
<dbReference type="FunFam" id="1.10.287.990:FF:000001">
    <property type="entry name" value="Superoxide dismutase"/>
    <property type="match status" value="1"/>
</dbReference>
<dbReference type="FunFam" id="3.55.40.20:FF:000004">
    <property type="entry name" value="Superoxide dismutase [Fe]"/>
    <property type="match status" value="1"/>
</dbReference>
<dbReference type="Gene3D" id="1.10.287.990">
    <property type="entry name" value="Fe,Mn superoxide dismutase (SOD) domain"/>
    <property type="match status" value="1"/>
</dbReference>
<dbReference type="Gene3D" id="3.55.40.20">
    <property type="entry name" value="Iron/manganese superoxide dismutase, C-terminal domain"/>
    <property type="match status" value="1"/>
</dbReference>
<dbReference type="InterPro" id="IPR050265">
    <property type="entry name" value="Fe/Mn_Superoxide_Dismutase"/>
</dbReference>
<dbReference type="InterPro" id="IPR001189">
    <property type="entry name" value="Mn/Fe_SOD"/>
</dbReference>
<dbReference type="InterPro" id="IPR019833">
    <property type="entry name" value="Mn/Fe_SOD_BS"/>
</dbReference>
<dbReference type="InterPro" id="IPR019832">
    <property type="entry name" value="Mn/Fe_SOD_C"/>
</dbReference>
<dbReference type="InterPro" id="IPR019831">
    <property type="entry name" value="Mn/Fe_SOD_N"/>
</dbReference>
<dbReference type="InterPro" id="IPR036324">
    <property type="entry name" value="Mn/Fe_SOD_N_sf"/>
</dbReference>
<dbReference type="InterPro" id="IPR036314">
    <property type="entry name" value="SOD_C_sf"/>
</dbReference>
<dbReference type="PANTHER" id="PTHR11404">
    <property type="entry name" value="SUPEROXIDE DISMUTASE 2"/>
    <property type="match status" value="1"/>
</dbReference>
<dbReference type="PANTHER" id="PTHR11404:SF6">
    <property type="entry name" value="SUPEROXIDE DISMUTASE [MN], MITOCHONDRIAL"/>
    <property type="match status" value="1"/>
</dbReference>
<dbReference type="Pfam" id="PF02777">
    <property type="entry name" value="Sod_Fe_C"/>
    <property type="match status" value="1"/>
</dbReference>
<dbReference type="Pfam" id="PF00081">
    <property type="entry name" value="Sod_Fe_N"/>
    <property type="match status" value="1"/>
</dbReference>
<dbReference type="PIRSF" id="PIRSF000349">
    <property type="entry name" value="SODismutase"/>
    <property type="match status" value="1"/>
</dbReference>
<dbReference type="PRINTS" id="PR01703">
    <property type="entry name" value="MNSODISMTASE"/>
</dbReference>
<dbReference type="SUPFAM" id="SSF54719">
    <property type="entry name" value="Fe,Mn superoxide dismutase (SOD), C-terminal domain"/>
    <property type="match status" value="1"/>
</dbReference>
<dbReference type="SUPFAM" id="SSF46609">
    <property type="entry name" value="Fe,Mn superoxide dismutase (SOD), N-terminal domain"/>
    <property type="match status" value="1"/>
</dbReference>
<dbReference type="PROSITE" id="PS00088">
    <property type="entry name" value="SOD_MN"/>
    <property type="match status" value="1"/>
</dbReference>
<comment type="function">
    <text evidence="2 7">Destroys superoxide anion radicals which are normally produced within the cells and which are toxic to biological systems.</text>
</comment>
<comment type="catalytic activity">
    <reaction evidence="2 7">
        <text>2 superoxide + 2 H(+) = H2O2 + O2</text>
        <dbReference type="Rhea" id="RHEA:20696"/>
        <dbReference type="ChEBI" id="CHEBI:15378"/>
        <dbReference type="ChEBI" id="CHEBI:15379"/>
        <dbReference type="ChEBI" id="CHEBI:16240"/>
        <dbReference type="ChEBI" id="CHEBI:18421"/>
        <dbReference type="EC" id="1.15.1.1"/>
    </reaction>
</comment>
<comment type="cofactor">
    <cofactor evidence="7">
        <name>Fe(3+)</name>
        <dbReference type="ChEBI" id="CHEBI:29034"/>
    </cofactor>
    <text evidence="1 4 5 6">Binds 1 Fe(3+) cation per subunit.</text>
</comment>
<comment type="subunit">
    <text evidence="4 7">Homotetramer.</text>
</comment>
<comment type="subcellular location">
    <subcellularLocation>
        <location evidence="2 7">Secreted</location>
    </subcellularLocation>
</comment>
<comment type="similarity">
    <text evidence="8">Belongs to the iron/manganese superoxide dismutase family.</text>
</comment>
<comment type="caution">
    <text evidence="9 10">Although found extracellularly, no signal sequence is present. An alternative secretory pathway may be used.</text>
</comment>
<organism>
    <name type="scientific">Mycobacterium tuberculosis (strain ATCC 25618 / H37Rv)</name>
    <dbReference type="NCBI Taxonomy" id="83332"/>
    <lineage>
        <taxon>Bacteria</taxon>
        <taxon>Bacillati</taxon>
        <taxon>Actinomycetota</taxon>
        <taxon>Actinomycetes</taxon>
        <taxon>Mycobacteriales</taxon>
        <taxon>Mycobacteriaceae</taxon>
        <taxon>Mycobacterium</taxon>
        <taxon>Mycobacterium tuberculosis complex</taxon>
    </lineage>
</organism>
<keyword id="KW-0002">3D-structure</keyword>
<keyword id="KW-0903">Direct protein sequencing</keyword>
<keyword id="KW-0408">Iron</keyword>
<keyword id="KW-1017">Isopeptide bond</keyword>
<keyword id="KW-0479">Metal-binding</keyword>
<keyword id="KW-0560">Oxidoreductase</keyword>
<keyword id="KW-1185">Reference proteome</keyword>
<keyword id="KW-0964">Secreted</keyword>
<keyword id="KW-0832">Ubl conjugation</keyword>
<reference key="1">
    <citation type="journal article" date="1991" name="Mol. Microbiol.">
        <title>Genetic analysis of superoxide dismutase, the 23 kilodalton antigen of Mycobacterium tuberculosis.</title>
        <authorList>
            <person name="Zhang Y."/>
        </authorList>
    </citation>
    <scope>NUCLEOTIDE SEQUENCE [GENOMIC DNA]</scope>
    <scope>FUNCTION</scope>
    <scope>CATALYTIC ACTIVITY</scope>
    <scope>SUBCELLULAR LOCATION</scope>
    <source>
        <strain>ATCC 35801 / TMC 107 / Erdman</strain>
    </source>
</reference>
<reference key="2">
    <citation type="journal article" date="1999" name="J. Biol. Chem.">
        <title>Export of recombinant Mycobacterium tuberculosis superoxide dismutase is dependent upon both information in the protein and mycobacterial export machinery. A model for studying export of leaderless proteins by pathogenic mycobacteria.</title>
        <authorList>
            <person name="Harth G."/>
            <person name="Horwitz M.A."/>
        </authorList>
    </citation>
    <scope>NUCLEOTIDE SEQUENCE [GENOMIC DNA]</scope>
    <scope>PROTEIN SEQUENCE OF 2-11</scope>
    <scope>FUNCTION</scope>
    <scope>CATALYTIC ACTIVITY</scope>
    <scope>COFACTOR</scope>
    <scope>SUBUNIT</scope>
    <scope>SUBCELLULAR LOCATION</scope>
    <source>
        <strain>ATCC 35801 / TMC 107 / Erdman</strain>
    </source>
</reference>
<reference key="3">
    <citation type="journal article" date="1998" name="Nature">
        <title>Deciphering the biology of Mycobacterium tuberculosis from the complete genome sequence.</title>
        <authorList>
            <person name="Cole S.T."/>
            <person name="Brosch R."/>
            <person name="Parkhill J."/>
            <person name="Garnier T."/>
            <person name="Churcher C.M."/>
            <person name="Harris D.E."/>
            <person name="Gordon S.V."/>
            <person name="Eiglmeier K."/>
            <person name="Gas S."/>
            <person name="Barry C.E. III"/>
            <person name="Tekaia F."/>
            <person name="Badcock K."/>
            <person name="Basham D."/>
            <person name="Brown D."/>
            <person name="Chillingworth T."/>
            <person name="Connor R."/>
            <person name="Davies R.M."/>
            <person name="Devlin K."/>
            <person name="Feltwell T."/>
            <person name="Gentles S."/>
            <person name="Hamlin N."/>
            <person name="Holroyd S."/>
            <person name="Hornsby T."/>
            <person name="Jagels K."/>
            <person name="Krogh A."/>
            <person name="McLean J."/>
            <person name="Moule S."/>
            <person name="Murphy L.D."/>
            <person name="Oliver S."/>
            <person name="Osborne J."/>
            <person name="Quail M.A."/>
            <person name="Rajandream M.A."/>
            <person name="Rogers J."/>
            <person name="Rutter S."/>
            <person name="Seeger K."/>
            <person name="Skelton S."/>
            <person name="Squares S."/>
            <person name="Squares R."/>
            <person name="Sulston J.E."/>
            <person name="Taylor K."/>
            <person name="Whitehead S."/>
            <person name="Barrell B.G."/>
        </authorList>
    </citation>
    <scope>NUCLEOTIDE SEQUENCE [LARGE SCALE GENOMIC DNA]</scope>
    <source>
        <strain>ATCC 25618 / H37Rv</strain>
    </source>
</reference>
<reference key="4">
    <citation type="journal article" date="2010" name="PLoS ONE">
        <title>Prokaryotic ubiquitin-like protein (Pup) proteome of Mycobacterium tuberculosis.</title>
        <authorList>
            <person name="Festa R.A."/>
            <person name="McAllister F."/>
            <person name="Pearce M.J."/>
            <person name="Mintseris J."/>
            <person name="Burns K.E."/>
            <person name="Gygi S.P."/>
            <person name="Darwin K.H."/>
        </authorList>
    </citation>
    <scope>PUPYLATION AT LYS-202</scope>
    <scope>IDENTIFICATION BY MASS SPECTROMETRY</scope>
    <source>
        <strain>ATCC 25618 / H37Rv</strain>
    </source>
</reference>
<reference key="5">
    <citation type="journal article" date="2011" name="Mol. Cell. Proteomics">
        <title>Proteogenomic analysis of Mycobacterium tuberculosis by high resolution mass spectrometry.</title>
        <authorList>
            <person name="Kelkar D.S."/>
            <person name="Kumar D."/>
            <person name="Kumar P."/>
            <person name="Balakrishnan L."/>
            <person name="Muthusamy B."/>
            <person name="Yadav A.K."/>
            <person name="Shrivastava P."/>
            <person name="Marimuthu A."/>
            <person name="Anand S."/>
            <person name="Sundaram H."/>
            <person name="Kingsbury R."/>
            <person name="Harsha H.C."/>
            <person name="Nair B."/>
            <person name="Prasad T.S."/>
            <person name="Chauhan D.S."/>
            <person name="Katoch K."/>
            <person name="Katoch V.M."/>
            <person name="Kumar P."/>
            <person name="Chaerkady R."/>
            <person name="Ramachandran S."/>
            <person name="Dash D."/>
            <person name="Pandey A."/>
        </authorList>
    </citation>
    <scope>IDENTIFICATION BY MASS SPECTROMETRY [LARGE SCALE ANALYSIS]</scope>
    <source>
        <strain>ATCC 25618 / H37Rv</strain>
    </source>
</reference>
<reference evidence="15" key="6">
    <citation type="journal article" date="1995" name="J. Mol. Biol.">
        <title>X-ray structure analysis of the iron-dependent superoxide dismutase from Mycobacterium tuberculosis at 2.0-A resolution reveals novel dimer-dimer interactions.</title>
        <authorList>
            <person name="Cooper J.B."/>
            <person name="McIntyre K."/>
            <person name="Badasso M.O."/>
            <person name="Wood S.P."/>
            <person name="Zhang Y."/>
            <person name="Garbe T.R."/>
            <person name="Young D."/>
        </authorList>
    </citation>
    <scope>X-RAY CRYSTALLOGRAPHY (2.00 ANGSTROMS) IN COMPLEX WITH IRON</scope>
    <scope>SUBUNIT</scope>
</reference>
<reference evidence="14" key="7">
    <citation type="journal article" date="1996" name="FEBS Lett.">
        <title>X-ray structure analysis of an engineered Fe-superoxide dismutase Gly-Ala mutant with significantly reduced stability to denaturant.</title>
        <authorList>
            <person name="Cooper J.B."/>
            <person name="Saward S."/>
            <person name="Erskine P.T."/>
            <person name="Badasso M.O."/>
            <person name="Wood S.P."/>
            <person name="Zhang Y."/>
            <person name="Young D."/>
        </authorList>
    </citation>
    <scope>X-RAY CRYSTALLOGRAPHY (2.9 ANGSTROMS) OF MUTANT ALA-152 IN COMPLEX WITH IRON</scope>
</reference>
<reference evidence="12 13" key="8">
    <citation type="journal article" date="1998" name="Eur. J. Biochem.">
        <title>Engineering a change in metal-ion specificity of the iron-dependent superoxide dismutase from Mycobacterium tuberculosis -X-ray structure analysis of site-directed mutants.</title>
        <authorList>
            <person name="Bunting K."/>
            <person name="Cooper J.B."/>
            <person name="Badasso M.O."/>
            <person name="Tickle I.J."/>
            <person name="Newton M."/>
            <person name="Wood S.P."/>
            <person name="Zhang Y."/>
            <person name="Young D.B."/>
        </authorList>
    </citation>
    <scope>X-RAY CRYSTALLOGRAPHY (2.5 ANGSTROMS) OF MUTANTS GLN-145 AND GLU-145 IN COMPLEX WITH IRON AND MANGANESE</scope>
</reference>
<reference evidence="11" key="9">
    <citation type="journal article" date="2002" name="Arch. Biochem. Biophys.">
        <title>Engineering of an intersubunit disulfide bridge in the iron-superoxide dismutase of Mycobacterium tuberculosis.</title>
        <authorList>
            <person name="Bunting K."/>
            <person name="Cooper J.B."/>
            <person name="Tickle I.J."/>
            <person name="Young D.B."/>
        </authorList>
    </citation>
    <scope>X-RAY CRYSTALLOGRAPHY (3.4 ANGSTROMS) OF MUTANT CYS-123 IN COMPLEX WITH IRON</scope>
</reference>
<accession>P9WGE7</accession>
<accession>L0TGX2</accession>
<accession>P17670</accession>
<accession>P96231</accession>
<evidence type="ECO:0000269" key="1">
    <source>
    </source>
</evidence>
<evidence type="ECO:0000269" key="2">
    <source>
    </source>
</evidence>
<evidence type="ECO:0000269" key="3">
    <source>
    </source>
</evidence>
<evidence type="ECO:0000269" key="4">
    <source>
    </source>
</evidence>
<evidence type="ECO:0000269" key="5">
    <source>
    </source>
</evidence>
<evidence type="ECO:0000269" key="6">
    <source>
    </source>
</evidence>
<evidence type="ECO:0000269" key="7">
    <source>
    </source>
</evidence>
<evidence type="ECO:0000305" key="8"/>
<evidence type="ECO:0000305" key="9">
    <source>
    </source>
</evidence>
<evidence type="ECO:0000305" key="10">
    <source>
    </source>
</evidence>
<evidence type="ECO:0007744" key="11">
    <source>
        <dbReference type="PDB" id="1GN2"/>
    </source>
</evidence>
<evidence type="ECO:0007744" key="12">
    <source>
        <dbReference type="PDB" id="1GN3"/>
    </source>
</evidence>
<evidence type="ECO:0007744" key="13">
    <source>
        <dbReference type="PDB" id="1GN4"/>
    </source>
</evidence>
<evidence type="ECO:0007744" key="14">
    <source>
        <dbReference type="PDB" id="1GN6"/>
    </source>
</evidence>
<evidence type="ECO:0007744" key="15">
    <source>
        <dbReference type="PDB" id="1IDS"/>
    </source>
</evidence>
<evidence type="ECO:0007829" key="16">
    <source>
        <dbReference type="PDB" id="1IDS"/>
    </source>
</evidence>
<proteinExistence type="evidence at protein level"/>
<feature type="chain" id="PRO_0000159990" description="Superoxide dismutase [Fe]">
    <location>
        <begin position="1"/>
        <end position="207"/>
    </location>
</feature>
<feature type="binding site" evidence="1 4 5 6 11 12 14 15">
    <location>
        <position position="28"/>
    </location>
    <ligand>
        <name>Fe(3+)</name>
        <dbReference type="ChEBI" id="CHEBI:29034"/>
    </ligand>
</feature>
<feature type="binding site" evidence="1 4 5 6 11 12 14 15">
    <location>
        <position position="76"/>
    </location>
    <ligand>
        <name>Fe(3+)</name>
        <dbReference type="ChEBI" id="CHEBI:29034"/>
    </ligand>
</feature>
<feature type="binding site" evidence="1 4 5 6 11 12 14 15">
    <location>
        <position position="160"/>
    </location>
    <ligand>
        <name>Fe(3+)</name>
        <dbReference type="ChEBI" id="CHEBI:29034"/>
    </ligand>
</feature>
<feature type="binding site" evidence="1 4 5 6 11 12 14 15">
    <location>
        <position position="164"/>
    </location>
    <ligand>
        <name>Fe(3+)</name>
        <dbReference type="ChEBI" id="CHEBI:29034"/>
    </ligand>
</feature>
<feature type="cross-link" description="Isoglutamyl lysine isopeptide (Lys-Gln) (interchain with Q-Cter in protein Pup)" evidence="3">
    <location>
        <position position="202"/>
    </location>
</feature>
<feature type="turn" evidence="16">
    <location>
        <begin position="13"/>
        <end position="19"/>
    </location>
</feature>
<feature type="helix" evidence="16">
    <location>
        <begin position="22"/>
        <end position="30"/>
    </location>
</feature>
<feature type="helix" evidence="16">
    <location>
        <begin position="32"/>
        <end position="52"/>
    </location>
</feature>
<feature type="helix" evidence="16">
    <location>
        <begin position="59"/>
        <end position="82"/>
    </location>
</feature>
<feature type="helix" evidence="16">
    <location>
        <begin position="93"/>
        <end position="103"/>
    </location>
</feature>
<feature type="helix" evidence="16">
    <location>
        <begin position="106"/>
        <end position="118"/>
    </location>
</feature>
<feature type="strand" evidence="16">
    <location>
        <begin position="121"/>
        <end position="131"/>
    </location>
</feature>
<feature type="turn" evidence="16">
    <location>
        <begin position="132"/>
        <end position="135"/>
    </location>
</feature>
<feature type="strand" evidence="16">
    <location>
        <begin position="136"/>
        <end position="143"/>
    </location>
</feature>
<feature type="turn" evidence="16">
    <location>
        <begin position="144"/>
        <end position="146"/>
    </location>
</feature>
<feature type="strand" evidence="16">
    <location>
        <begin position="147"/>
        <end position="149"/>
    </location>
</feature>
<feature type="strand" evidence="16">
    <location>
        <begin position="153"/>
        <end position="160"/>
    </location>
</feature>
<feature type="helix" evidence="16">
    <location>
        <begin position="163"/>
        <end position="165"/>
    </location>
</feature>
<feature type="helix" evidence="16">
    <location>
        <begin position="167"/>
        <end position="170"/>
    </location>
</feature>
<feature type="helix" evidence="16">
    <location>
        <begin position="174"/>
        <end position="180"/>
    </location>
</feature>
<feature type="helix" evidence="16">
    <location>
        <begin position="181"/>
        <end position="183"/>
    </location>
</feature>
<feature type="helix" evidence="16">
    <location>
        <begin position="187"/>
        <end position="198"/>
    </location>
</feature>
<sequence length="207" mass="23034">MAEYTLPDLDWDYGALEPHISGQINELHHSKHHATYVKGANDAVAKLEEARAKEDHSAILLNEKNLAFNLAGHVNHTIWWKNLSPNGGDKPTGELAAAIADAFGSFDKFRAQFHAAATTVQGSGWAALGWDTLGNKLLIFQVYDHQTNFPLGIVPLLLLDMWEHAFYLQYKNVKVDFAKAFWNVVNWADVQSRYAAATSQTKGLIFG</sequence>
<name>SODF_MYCTU</name>
<protein>
    <recommendedName>
        <fullName>Superoxide dismutase [Fe]</fullName>
        <ecNumber evidence="2 7">1.15.1.1</ecNumber>
    </recommendedName>
</protein>